<sequence>MKDLISIIDVKDHVGETVKIGAWVADKSGKGKLQFLQLRDGTAFFQAVVFKPNMIEKFGEEEGTAKFDEIKHLSQETSVYVTGVVKEDSRSKFGYELDVTELEVIGHSHDYPITPKEHGVEFLLDNRHLWLRSKRQMAMMQVRNAIIYASYDFFAKNGFIKFDSPILSGNAAENTTELFETDYFGNPAFLSQSGQLYLEAGAMALGRVFDFGPVFRAEKSKTRRHLTEFWMMDAEYPFVTHDESLDIQEAYVKALIQGVLDNAAYALETLERDTSMLQKYIDTPFKRVSYDDAIDLLQAHENDEDTDYEHVEHGDDFGSPHETWISNYYGVPTFIVNYPASFKAFYMKPVPGNPERVLCADLLAPEGYGEIIGGSERETDYDLLLKKIADFGLDPKDYDWYLELRKFGSVPHAGFGLGLERMVTFVAGTEHIREAIPFPRMINRIQP</sequence>
<protein>
    <recommendedName>
        <fullName evidence="1">Asparagine--tRNA ligase</fullName>
        <ecNumber evidence="1">6.1.1.22</ecNumber>
    </recommendedName>
    <alternativeName>
        <fullName evidence="1">Asparaginyl-tRNA synthetase</fullName>
        <shortName evidence="1">AsnRS</shortName>
    </alternativeName>
</protein>
<evidence type="ECO:0000255" key="1">
    <source>
        <dbReference type="HAMAP-Rule" id="MF_00534"/>
    </source>
</evidence>
<name>SYN_LACLM</name>
<keyword id="KW-0030">Aminoacyl-tRNA synthetase</keyword>
<keyword id="KW-0067">ATP-binding</keyword>
<keyword id="KW-0963">Cytoplasm</keyword>
<keyword id="KW-0436">Ligase</keyword>
<keyword id="KW-0547">Nucleotide-binding</keyword>
<keyword id="KW-0648">Protein biosynthesis</keyword>
<comment type="catalytic activity">
    <reaction evidence="1">
        <text>tRNA(Asn) + L-asparagine + ATP = L-asparaginyl-tRNA(Asn) + AMP + diphosphate + H(+)</text>
        <dbReference type="Rhea" id="RHEA:11180"/>
        <dbReference type="Rhea" id="RHEA-COMP:9659"/>
        <dbReference type="Rhea" id="RHEA-COMP:9674"/>
        <dbReference type="ChEBI" id="CHEBI:15378"/>
        <dbReference type="ChEBI" id="CHEBI:30616"/>
        <dbReference type="ChEBI" id="CHEBI:33019"/>
        <dbReference type="ChEBI" id="CHEBI:58048"/>
        <dbReference type="ChEBI" id="CHEBI:78442"/>
        <dbReference type="ChEBI" id="CHEBI:78515"/>
        <dbReference type="ChEBI" id="CHEBI:456215"/>
        <dbReference type="EC" id="6.1.1.22"/>
    </reaction>
</comment>
<comment type="subunit">
    <text evidence="1">Homodimer.</text>
</comment>
<comment type="subcellular location">
    <subcellularLocation>
        <location evidence="1">Cytoplasm</location>
    </subcellularLocation>
</comment>
<comment type="similarity">
    <text evidence="1">Belongs to the class-II aminoacyl-tRNA synthetase family.</text>
</comment>
<accession>A2RMQ1</accession>
<feature type="chain" id="PRO_1000061021" description="Asparagine--tRNA ligase">
    <location>
        <begin position="1"/>
        <end position="447"/>
    </location>
</feature>
<reference key="1">
    <citation type="journal article" date="2007" name="J. Bacteriol.">
        <title>The complete genome sequence of the lactic acid bacterial paradigm Lactococcus lactis subsp. cremoris MG1363.</title>
        <authorList>
            <person name="Wegmann U."/>
            <person name="O'Connell-Motherway M."/>
            <person name="Zomer A."/>
            <person name="Buist G."/>
            <person name="Shearman C."/>
            <person name="Canchaya C."/>
            <person name="Ventura M."/>
            <person name="Goesmann A."/>
            <person name="Gasson M.J."/>
            <person name="Kuipers O.P."/>
            <person name="van Sinderen D."/>
            <person name="Kok J."/>
        </authorList>
    </citation>
    <scope>NUCLEOTIDE SEQUENCE [LARGE SCALE GENOMIC DNA]</scope>
    <source>
        <strain>MG1363</strain>
    </source>
</reference>
<proteinExistence type="inferred from homology"/>
<gene>
    <name evidence="1" type="primary">asnS</name>
    <name type="ordered locus">llmg_2017</name>
</gene>
<organism>
    <name type="scientific">Lactococcus lactis subsp. cremoris (strain MG1363)</name>
    <dbReference type="NCBI Taxonomy" id="416870"/>
    <lineage>
        <taxon>Bacteria</taxon>
        <taxon>Bacillati</taxon>
        <taxon>Bacillota</taxon>
        <taxon>Bacilli</taxon>
        <taxon>Lactobacillales</taxon>
        <taxon>Streptococcaceae</taxon>
        <taxon>Lactococcus</taxon>
        <taxon>Lactococcus cremoris subsp. cremoris</taxon>
    </lineage>
</organism>
<dbReference type="EC" id="6.1.1.22" evidence="1"/>
<dbReference type="EMBL" id="AM406671">
    <property type="protein sequence ID" value="CAL98585.1"/>
    <property type="molecule type" value="Genomic_DNA"/>
</dbReference>
<dbReference type="RefSeq" id="WP_011835743.1">
    <property type="nucleotide sequence ID" value="NC_009004.1"/>
</dbReference>
<dbReference type="SMR" id="A2RMQ1"/>
<dbReference type="STRING" id="416870.llmg_2017"/>
<dbReference type="KEGG" id="llm:llmg_2017"/>
<dbReference type="eggNOG" id="COG0017">
    <property type="taxonomic scope" value="Bacteria"/>
</dbReference>
<dbReference type="HOGENOM" id="CLU_004553_2_0_9"/>
<dbReference type="OrthoDB" id="9762036at2"/>
<dbReference type="PhylomeDB" id="A2RMQ1"/>
<dbReference type="Proteomes" id="UP000000364">
    <property type="component" value="Chromosome"/>
</dbReference>
<dbReference type="GO" id="GO:0005737">
    <property type="term" value="C:cytoplasm"/>
    <property type="evidence" value="ECO:0007669"/>
    <property type="project" value="UniProtKB-SubCell"/>
</dbReference>
<dbReference type="GO" id="GO:0004816">
    <property type="term" value="F:asparagine-tRNA ligase activity"/>
    <property type="evidence" value="ECO:0007669"/>
    <property type="project" value="UniProtKB-UniRule"/>
</dbReference>
<dbReference type="GO" id="GO:0005524">
    <property type="term" value="F:ATP binding"/>
    <property type="evidence" value="ECO:0007669"/>
    <property type="project" value="UniProtKB-UniRule"/>
</dbReference>
<dbReference type="GO" id="GO:0140096">
    <property type="term" value="F:catalytic activity, acting on a protein"/>
    <property type="evidence" value="ECO:0007669"/>
    <property type="project" value="UniProtKB-ARBA"/>
</dbReference>
<dbReference type="GO" id="GO:0003676">
    <property type="term" value="F:nucleic acid binding"/>
    <property type="evidence" value="ECO:0007669"/>
    <property type="project" value="InterPro"/>
</dbReference>
<dbReference type="GO" id="GO:0016740">
    <property type="term" value="F:transferase activity"/>
    <property type="evidence" value="ECO:0007669"/>
    <property type="project" value="UniProtKB-ARBA"/>
</dbReference>
<dbReference type="GO" id="GO:0006421">
    <property type="term" value="P:asparaginyl-tRNA aminoacylation"/>
    <property type="evidence" value="ECO:0007669"/>
    <property type="project" value="UniProtKB-UniRule"/>
</dbReference>
<dbReference type="CDD" id="cd04323">
    <property type="entry name" value="AsnRS_cyto_like_N"/>
    <property type="match status" value="1"/>
</dbReference>
<dbReference type="CDD" id="cd00776">
    <property type="entry name" value="AsxRS_core"/>
    <property type="match status" value="1"/>
</dbReference>
<dbReference type="Gene3D" id="3.30.930.10">
    <property type="entry name" value="Bira Bifunctional Protein, Domain 2"/>
    <property type="match status" value="1"/>
</dbReference>
<dbReference type="Gene3D" id="2.40.50.140">
    <property type="entry name" value="Nucleic acid-binding proteins"/>
    <property type="match status" value="1"/>
</dbReference>
<dbReference type="HAMAP" id="MF_00534">
    <property type="entry name" value="Asn_tRNA_synth"/>
    <property type="match status" value="1"/>
</dbReference>
<dbReference type="InterPro" id="IPR004364">
    <property type="entry name" value="Aa-tRNA-synt_II"/>
</dbReference>
<dbReference type="InterPro" id="IPR006195">
    <property type="entry name" value="aa-tRNA-synth_II"/>
</dbReference>
<dbReference type="InterPro" id="IPR045864">
    <property type="entry name" value="aa-tRNA-synth_II/BPL/LPL"/>
</dbReference>
<dbReference type="InterPro" id="IPR004522">
    <property type="entry name" value="Asn-tRNA-ligase"/>
</dbReference>
<dbReference type="InterPro" id="IPR002312">
    <property type="entry name" value="Asp/Asn-tRNA-synth_IIb"/>
</dbReference>
<dbReference type="InterPro" id="IPR012340">
    <property type="entry name" value="NA-bd_OB-fold"/>
</dbReference>
<dbReference type="InterPro" id="IPR004365">
    <property type="entry name" value="NA-bd_OB_tRNA"/>
</dbReference>
<dbReference type="NCBIfam" id="TIGR00457">
    <property type="entry name" value="asnS"/>
    <property type="match status" value="1"/>
</dbReference>
<dbReference type="NCBIfam" id="NF003037">
    <property type="entry name" value="PRK03932.1"/>
    <property type="match status" value="1"/>
</dbReference>
<dbReference type="PANTHER" id="PTHR22594:SF34">
    <property type="entry name" value="ASPARAGINE--TRNA LIGASE, MITOCHONDRIAL-RELATED"/>
    <property type="match status" value="1"/>
</dbReference>
<dbReference type="PANTHER" id="PTHR22594">
    <property type="entry name" value="ASPARTYL/LYSYL-TRNA SYNTHETASE"/>
    <property type="match status" value="1"/>
</dbReference>
<dbReference type="Pfam" id="PF00152">
    <property type="entry name" value="tRNA-synt_2"/>
    <property type="match status" value="1"/>
</dbReference>
<dbReference type="Pfam" id="PF01336">
    <property type="entry name" value="tRNA_anti-codon"/>
    <property type="match status" value="1"/>
</dbReference>
<dbReference type="PRINTS" id="PR01042">
    <property type="entry name" value="TRNASYNTHASP"/>
</dbReference>
<dbReference type="SUPFAM" id="SSF55681">
    <property type="entry name" value="Class II aaRS and biotin synthetases"/>
    <property type="match status" value="1"/>
</dbReference>
<dbReference type="SUPFAM" id="SSF50249">
    <property type="entry name" value="Nucleic acid-binding proteins"/>
    <property type="match status" value="1"/>
</dbReference>
<dbReference type="PROSITE" id="PS50862">
    <property type="entry name" value="AA_TRNA_LIGASE_II"/>
    <property type="match status" value="1"/>
</dbReference>